<dbReference type="EC" id="3.4.11.9"/>
<dbReference type="EMBL" id="EQ962653">
    <property type="protein sequence ID" value="EED22224.1"/>
    <property type="molecule type" value="Genomic_DNA"/>
</dbReference>
<dbReference type="RefSeq" id="XP_002479187.1">
    <property type="nucleotide sequence ID" value="XM_002479142.1"/>
</dbReference>
<dbReference type="SMR" id="B8M2W9"/>
<dbReference type="STRING" id="441959.B8M2W9"/>
<dbReference type="GeneID" id="8103800"/>
<dbReference type="VEuPathDB" id="FungiDB:TSTA_094700"/>
<dbReference type="eggNOG" id="KOG2737">
    <property type="taxonomic scope" value="Eukaryota"/>
</dbReference>
<dbReference type="HOGENOM" id="CLU_017266_1_2_1"/>
<dbReference type="InParanoid" id="B8M2W9"/>
<dbReference type="OMA" id="YELRMIR"/>
<dbReference type="OrthoDB" id="10261878at2759"/>
<dbReference type="PhylomeDB" id="B8M2W9"/>
<dbReference type="Proteomes" id="UP000001745">
    <property type="component" value="Unassembled WGS sequence"/>
</dbReference>
<dbReference type="GO" id="GO:0030145">
    <property type="term" value="F:manganese ion binding"/>
    <property type="evidence" value="ECO:0007669"/>
    <property type="project" value="InterPro"/>
</dbReference>
<dbReference type="GO" id="GO:0070006">
    <property type="term" value="F:metalloaminopeptidase activity"/>
    <property type="evidence" value="ECO:0007669"/>
    <property type="project" value="InterPro"/>
</dbReference>
<dbReference type="GO" id="GO:0006508">
    <property type="term" value="P:proteolysis"/>
    <property type="evidence" value="ECO:0007669"/>
    <property type="project" value="UniProtKB-KW"/>
</dbReference>
<dbReference type="CDD" id="cd01087">
    <property type="entry name" value="Prolidase"/>
    <property type="match status" value="1"/>
</dbReference>
<dbReference type="Gene3D" id="3.90.230.10">
    <property type="entry name" value="Creatinase/methionine aminopeptidase superfamily"/>
    <property type="match status" value="1"/>
</dbReference>
<dbReference type="Gene3D" id="3.40.350.10">
    <property type="entry name" value="Creatinase/prolidase N-terminal domain"/>
    <property type="match status" value="1"/>
</dbReference>
<dbReference type="InterPro" id="IPR007865">
    <property type="entry name" value="Aminopep_P_N"/>
</dbReference>
<dbReference type="InterPro" id="IPR029149">
    <property type="entry name" value="Creatin/AminoP/Spt16_N"/>
</dbReference>
<dbReference type="InterPro" id="IPR036005">
    <property type="entry name" value="Creatinase/aminopeptidase-like"/>
</dbReference>
<dbReference type="InterPro" id="IPR000994">
    <property type="entry name" value="Pept_M24"/>
</dbReference>
<dbReference type="InterPro" id="IPR001131">
    <property type="entry name" value="Peptidase_M24B_aminopep-P_CS"/>
</dbReference>
<dbReference type="InterPro" id="IPR052433">
    <property type="entry name" value="X-Pro_dipept-like"/>
</dbReference>
<dbReference type="PANTHER" id="PTHR43226">
    <property type="entry name" value="XAA-PRO AMINOPEPTIDASE 3"/>
    <property type="match status" value="1"/>
</dbReference>
<dbReference type="PANTHER" id="PTHR43226:SF3">
    <property type="entry name" value="XAA-PRO AMINOPEPTIDASE AN0832-RELATED"/>
    <property type="match status" value="1"/>
</dbReference>
<dbReference type="Pfam" id="PF05195">
    <property type="entry name" value="AMP_N"/>
    <property type="match status" value="1"/>
</dbReference>
<dbReference type="Pfam" id="PF00557">
    <property type="entry name" value="Peptidase_M24"/>
    <property type="match status" value="1"/>
</dbReference>
<dbReference type="SMART" id="SM01011">
    <property type="entry name" value="AMP_N"/>
    <property type="match status" value="1"/>
</dbReference>
<dbReference type="SUPFAM" id="SSF55920">
    <property type="entry name" value="Creatinase/aminopeptidase"/>
    <property type="match status" value="1"/>
</dbReference>
<dbReference type="SUPFAM" id="SSF53092">
    <property type="entry name" value="Creatinase/prolidase N-terminal domain"/>
    <property type="match status" value="1"/>
</dbReference>
<dbReference type="PROSITE" id="PS00491">
    <property type="entry name" value="PROLINE_PEPTIDASE"/>
    <property type="match status" value="1"/>
</dbReference>
<organism>
    <name type="scientific">Talaromyces stipitatus (strain ATCC 10500 / CBS 375.48 / QM 6759 / NRRL 1006)</name>
    <name type="common">Penicillium stipitatum</name>
    <dbReference type="NCBI Taxonomy" id="441959"/>
    <lineage>
        <taxon>Eukaryota</taxon>
        <taxon>Fungi</taxon>
        <taxon>Dikarya</taxon>
        <taxon>Ascomycota</taxon>
        <taxon>Pezizomycotina</taxon>
        <taxon>Eurotiomycetes</taxon>
        <taxon>Eurotiomycetidae</taxon>
        <taxon>Eurotiales</taxon>
        <taxon>Trichocomaceae</taxon>
        <taxon>Talaromyces</taxon>
        <taxon>Talaromyces sect. Talaromyces</taxon>
    </lineage>
</organism>
<comment type="function">
    <text evidence="1">Catalyzes the removal of a penultimate prolyl residue from the N-termini of peptides.</text>
</comment>
<comment type="catalytic activity">
    <reaction>
        <text>Release of any N-terminal amino acid, including proline, that is linked to proline, even from a dipeptide or tripeptide.</text>
        <dbReference type="EC" id="3.4.11.9"/>
    </reaction>
</comment>
<comment type="cofactor">
    <cofactor evidence="1">
        <name>Mn(2+)</name>
        <dbReference type="ChEBI" id="CHEBI:29035"/>
    </cofactor>
    <text evidence="1">Binds 2 manganese ions per subunit.</text>
</comment>
<comment type="similarity">
    <text evidence="2">Belongs to the peptidase M24B family.</text>
</comment>
<name>AMPP2_TALSN</name>
<protein>
    <recommendedName>
        <fullName>Probable Xaa-Pro aminopeptidase TSTA_094700</fullName>
        <ecNumber>3.4.11.9</ecNumber>
    </recommendedName>
    <alternativeName>
        <fullName>Aminoacylproline aminopeptidase</fullName>
    </alternativeName>
    <alternativeName>
        <fullName>Prolidase</fullName>
    </alternativeName>
</protein>
<proteinExistence type="inferred from homology"/>
<reference key="1">
    <citation type="journal article" date="2015" name="Genome Announc.">
        <title>Genome sequence of the AIDS-associated pathogen Penicillium marneffei (ATCC18224) and its near taxonomic relative Talaromyces stipitatus (ATCC10500).</title>
        <authorList>
            <person name="Nierman W.C."/>
            <person name="Fedorova-Abrams N.D."/>
            <person name="Andrianopoulos A."/>
        </authorList>
    </citation>
    <scope>NUCLEOTIDE SEQUENCE [LARGE SCALE GENOMIC DNA]</scope>
    <source>
        <strain>ATCC 10500 / CBS 375.48 / QM 6759 / NRRL 1006</strain>
    </source>
</reference>
<gene>
    <name type="ORF">TSTA_094700</name>
</gene>
<sequence>MSPSPALHAAAFQGIGAPDIQRFHINLSVGSNVNRYPAKQHARKVASKLGISRGLIYLVGKPTVFLDDSDQTIPFRQRRYFYYLSGANEPDCHLTYDIAKDHLTLYVPDFDLRQTVWMGPTISIGEALDRYDIDNARYAGSLQTDISGWLRLRGDDSQIILLHPDHRPPIEYEQDLFETKNLVPAMNAARGVKDSYEIEMIRKANIVSGLAHTAVLEKIGQMTNESDIAGLFLETCMTHGAPDQAYGIIAASGENGATLHYMKNNEDFGNRLSVCLDAGAEYECYASDVTRTFPISRTGEWPTPEVRDIYLAVERMQEECIRLIKPGVRFRDVHLHASRVAVEELLKLGVFQKDNSVDAIMASGAVSVFFPHGLGHHVGLEVHDVAEQSVMAATDDSSPRTRVRGFLMQPASAMSAALLEESMIVTVEPGIYFNRLALKNARTLPIARFIDFDVVERYYPIGGVRIEDDILVTATGYENLTTAPKGEEALDIIRRSSVKSSRA</sequence>
<evidence type="ECO:0000250" key="1"/>
<evidence type="ECO:0000305" key="2"/>
<keyword id="KW-0031">Aminopeptidase</keyword>
<keyword id="KW-0378">Hydrolase</keyword>
<keyword id="KW-0464">Manganese</keyword>
<keyword id="KW-0479">Metal-binding</keyword>
<keyword id="KW-0482">Metalloprotease</keyword>
<keyword id="KW-0645">Protease</keyword>
<keyword id="KW-1185">Reference proteome</keyword>
<accession>B8M2W9</accession>
<feature type="chain" id="PRO_0000411853" description="Probable Xaa-Pro aminopeptidase TSTA_094700">
    <location>
        <begin position="1"/>
        <end position="503"/>
    </location>
</feature>
<feature type="binding site" evidence="1">
    <location>
        <position position="277"/>
    </location>
    <ligand>
        <name>Mn(2+)</name>
        <dbReference type="ChEBI" id="CHEBI:29035"/>
        <label>2</label>
    </ligand>
</feature>
<feature type="binding site" evidence="1">
    <location>
        <position position="288"/>
    </location>
    <ligand>
        <name>Mn(2+)</name>
        <dbReference type="ChEBI" id="CHEBI:29035"/>
        <label>1</label>
    </ligand>
</feature>
<feature type="binding site" evidence="1">
    <location>
        <position position="288"/>
    </location>
    <ligand>
        <name>Mn(2+)</name>
        <dbReference type="ChEBI" id="CHEBI:29035"/>
        <label>2</label>
    </ligand>
</feature>
<feature type="binding site" evidence="1">
    <location>
        <position position="428"/>
    </location>
    <ligand>
        <name>Mn(2+)</name>
        <dbReference type="ChEBI" id="CHEBI:29035"/>
        <label>1</label>
    </ligand>
</feature>
<feature type="binding site" evidence="1">
    <location>
        <position position="467"/>
    </location>
    <ligand>
        <name>Mn(2+)</name>
        <dbReference type="ChEBI" id="CHEBI:29035"/>
        <label>1</label>
    </ligand>
</feature>
<feature type="binding site" evidence="1">
    <location>
        <position position="467"/>
    </location>
    <ligand>
        <name>Mn(2+)</name>
        <dbReference type="ChEBI" id="CHEBI:29035"/>
        <label>2</label>
    </ligand>
</feature>